<dbReference type="EMBL" id="AC025417">
    <property type="protein sequence ID" value="AAF88093.1"/>
    <property type="status" value="ALT_SEQ"/>
    <property type="molecule type" value="Genomic_DNA"/>
</dbReference>
<dbReference type="EMBL" id="CP002684">
    <property type="protein sequence ID" value="AEE28915.2"/>
    <property type="molecule type" value="Genomic_DNA"/>
</dbReference>
<dbReference type="PIR" id="D86260">
    <property type="entry name" value="D86260"/>
</dbReference>
<dbReference type="SMR" id="P0C7Q7"/>
<dbReference type="FunCoup" id="P0C7Q7">
    <property type="interactions" value="41"/>
</dbReference>
<dbReference type="STRING" id="3702.P0C7Q7"/>
<dbReference type="iPTMnet" id="P0C7Q7"/>
<dbReference type="PaxDb" id="3702-AT1G12700.1"/>
<dbReference type="EnsemblPlants" id="AT1G12700.1">
    <property type="protein sequence ID" value="AT1G12700.1"/>
    <property type="gene ID" value="AT1G12700"/>
</dbReference>
<dbReference type="GeneID" id="837825"/>
<dbReference type="Gramene" id="AT1G12700.1">
    <property type="protein sequence ID" value="AT1G12700.1"/>
    <property type="gene ID" value="AT1G12700"/>
</dbReference>
<dbReference type="KEGG" id="ath:AT1G12700"/>
<dbReference type="Araport" id="AT1G12700"/>
<dbReference type="TAIR" id="AT1G12700">
    <property type="gene designation" value="RPF1"/>
</dbReference>
<dbReference type="eggNOG" id="KOG0327">
    <property type="taxonomic scope" value="Eukaryota"/>
</dbReference>
<dbReference type="eggNOG" id="KOG4197">
    <property type="taxonomic scope" value="Eukaryota"/>
</dbReference>
<dbReference type="HOGENOM" id="CLU_002706_49_0_1"/>
<dbReference type="InParanoid" id="P0C7Q7"/>
<dbReference type="OMA" id="HAMQNNE"/>
<dbReference type="PhylomeDB" id="P0C7Q7"/>
<dbReference type="PRO" id="PR:P0C7Q7"/>
<dbReference type="Proteomes" id="UP000006548">
    <property type="component" value="Chromosome 1"/>
</dbReference>
<dbReference type="ExpressionAtlas" id="P0C7Q7">
    <property type="expression patterns" value="baseline and differential"/>
</dbReference>
<dbReference type="GO" id="GO:0005739">
    <property type="term" value="C:mitochondrion"/>
    <property type="evidence" value="ECO:0007669"/>
    <property type="project" value="UniProtKB-SubCell"/>
</dbReference>
<dbReference type="GO" id="GO:0090617">
    <property type="term" value="P:mitochondrial mRNA 5'-end processing"/>
    <property type="evidence" value="ECO:0000270"/>
    <property type="project" value="TAIR"/>
</dbReference>
<dbReference type="GO" id="GO:0080156">
    <property type="term" value="P:mitochondrial mRNA modification"/>
    <property type="evidence" value="ECO:0000315"/>
    <property type="project" value="TAIR"/>
</dbReference>
<dbReference type="FunFam" id="1.25.40.10:FF:003431">
    <property type="entry name" value="Pentatricopeptide repeat-containing protein At1g62670, mitochondrial"/>
    <property type="match status" value="1"/>
</dbReference>
<dbReference type="FunFam" id="1.25.40.10:FF:000558">
    <property type="entry name" value="Pentatricopeptide repeat-containing protein At5g39710"/>
    <property type="match status" value="1"/>
</dbReference>
<dbReference type="Gene3D" id="1.25.40.10">
    <property type="entry name" value="Tetratricopeptide repeat domain"/>
    <property type="match status" value="6"/>
</dbReference>
<dbReference type="InterPro" id="IPR002885">
    <property type="entry name" value="Pentatricopeptide_rpt"/>
</dbReference>
<dbReference type="InterPro" id="IPR050667">
    <property type="entry name" value="PPR-containing_protein"/>
</dbReference>
<dbReference type="InterPro" id="IPR011990">
    <property type="entry name" value="TPR-like_helical_dom_sf"/>
</dbReference>
<dbReference type="NCBIfam" id="TIGR00756">
    <property type="entry name" value="PPR"/>
    <property type="match status" value="13"/>
</dbReference>
<dbReference type="PANTHER" id="PTHR47939">
    <property type="entry name" value="MEMBRANE-ASSOCIATED SALT-INDUCIBLE PROTEIN-LIKE"/>
    <property type="match status" value="1"/>
</dbReference>
<dbReference type="PANTHER" id="PTHR47939:SF13">
    <property type="entry name" value="OS03G0201400 PROTEIN"/>
    <property type="match status" value="1"/>
</dbReference>
<dbReference type="Pfam" id="PF12854">
    <property type="entry name" value="PPR_1"/>
    <property type="match status" value="3"/>
</dbReference>
<dbReference type="Pfam" id="PF13041">
    <property type="entry name" value="PPR_2"/>
    <property type="match status" value="5"/>
</dbReference>
<dbReference type="PROSITE" id="PS51375">
    <property type="entry name" value="PPR"/>
    <property type="match status" value="14"/>
</dbReference>
<keyword id="KW-0496">Mitochondrion</keyword>
<keyword id="KW-1185">Reference proteome</keyword>
<keyword id="KW-0677">Repeat</keyword>
<keyword id="KW-0809">Transit peptide</keyword>
<comment type="subcellular location">
    <subcellularLocation>
        <location evidence="2">Mitochondrion</location>
    </subcellularLocation>
</comment>
<comment type="similarity">
    <text evidence="2">Belongs to the PPR family. P subfamily.</text>
</comment>
<comment type="sequence caution" evidence="2">
    <conflict type="erroneous gene model prediction">
        <sequence resource="EMBL-CDS" id="AAF88093"/>
    </conflict>
    <text>The predicted gene has been split into 2 genes: At1g12680 and At1g12700.</text>
</comment>
<comment type="online information" name="Pentatricopeptide repeat proteins">
    <link uri="https://ppr.plantenergy.uwa.edu.au"/>
</comment>
<evidence type="ECO:0000255" key="1"/>
<evidence type="ECO:0000305" key="2"/>
<accession>P0C7Q7</accession>
<accession>F4IDV5</accession>
<accession>Q9LN78</accession>
<protein>
    <recommendedName>
        <fullName>Putative pentatricopeptide repeat-containing protein At1g12700, mitochondrial</fullName>
    </recommendedName>
</protein>
<sequence length="602" mass="67178">MMIKRSITTNMKALRLIQPHLLKTGSLRTDLLCTISSFFSSCERDFSSISNGNVCFRERLRSGIVDIKKDDAIALFQEMIRSRPLPSLVDFSRFFSAIARTKQFNLVLDFCKQLELNGIAHNIYTLNIMINCFCRCCKTCFAYSVLGKVMKLGYEPDTTTFNTLIKGLFLEGKVSEAVVLVDRMVENGCQPDVVTYNSIVNGICRSGDTSLALDLLRKMEERNVKADVFTYSTIIDSLCRDGCIDAAISLFKEMETKGIKSSVVTYNSLVRGLCKAGKWNDGALLLKDMVSREIVPNVITFNVLLDVFVKEGKLQEANELYKEMITRGISPNIITYNTLMDGYCMQNRLSEANNMLDLMVRNKCSPDIVTFTSLIKGYCMVKRVDDGMKVFRNISKRGLVANAVTYSILVQGFCQSGKIKLAEELFQEMVSHGVLPDVMTYGILLDGLCDNGKLEKALEIFEDLQKSKMDLGIVMYTTIIEGMCKGGKVEDAWNLFCSLPCKGVKPNVMTYTVMISGLCKKGSLSEANILLRKMEEDGNAPNDCTYNTLIRAHLRDGDLTASAKLIEEMKSCGFSADASSIKMVIDMLLSGELDKSFLDMLS</sequence>
<name>PPR38_ARATH</name>
<reference key="1">
    <citation type="journal article" date="2000" name="Nature">
        <title>Sequence and analysis of chromosome 1 of the plant Arabidopsis thaliana.</title>
        <authorList>
            <person name="Theologis A."/>
            <person name="Ecker J.R."/>
            <person name="Palm C.J."/>
            <person name="Federspiel N.A."/>
            <person name="Kaul S."/>
            <person name="White O."/>
            <person name="Alonso J."/>
            <person name="Altafi H."/>
            <person name="Araujo R."/>
            <person name="Bowman C.L."/>
            <person name="Brooks S.Y."/>
            <person name="Buehler E."/>
            <person name="Chan A."/>
            <person name="Chao Q."/>
            <person name="Chen H."/>
            <person name="Cheuk R.F."/>
            <person name="Chin C.W."/>
            <person name="Chung M.K."/>
            <person name="Conn L."/>
            <person name="Conway A.B."/>
            <person name="Conway A.R."/>
            <person name="Creasy T.H."/>
            <person name="Dewar K."/>
            <person name="Dunn P."/>
            <person name="Etgu P."/>
            <person name="Feldblyum T.V."/>
            <person name="Feng J.-D."/>
            <person name="Fong B."/>
            <person name="Fujii C.Y."/>
            <person name="Gill J.E."/>
            <person name="Goldsmith A.D."/>
            <person name="Haas B."/>
            <person name="Hansen N.F."/>
            <person name="Hughes B."/>
            <person name="Huizar L."/>
            <person name="Hunter J.L."/>
            <person name="Jenkins J."/>
            <person name="Johnson-Hopson C."/>
            <person name="Khan S."/>
            <person name="Khaykin E."/>
            <person name="Kim C.J."/>
            <person name="Koo H.L."/>
            <person name="Kremenetskaia I."/>
            <person name="Kurtz D.B."/>
            <person name="Kwan A."/>
            <person name="Lam B."/>
            <person name="Langin-Hooper S."/>
            <person name="Lee A."/>
            <person name="Lee J.M."/>
            <person name="Lenz C.A."/>
            <person name="Li J.H."/>
            <person name="Li Y.-P."/>
            <person name="Lin X."/>
            <person name="Liu S.X."/>
            <person name="Liu Z.A."/>
            <person name="Luros J.S."/>
            <person name="Maiti R."/>
            <person name="Marziali A."/>
            <person name="Militscher J."/>
            <person name="Miranda M."/>
            <person name="Nguyen M."/>
            <person name="Nierman W.C."/>
            <person name="Osborne B.I."/>
            <person name="Pai G."/>
            <person name="Peterson J."/>
            <person name="Pham P.K."/>
            <person name="Rizzo M."/>
            <person name="Rooney T."/>
            <person name="Rowley D."/>
            <person name="Sakano H."/>
            <person name="Salzberg S.L."/>
            <person name="Schwartz J.R."/>
            <person name="Shinn P."/>
            <person name="Southwick A.M."/>
            <person name="Sun H."/>
            <person name="Tallon L.J."/>
            <person name="Tambunga G."/>
            <person name="Toriumi M.J."/>
            <person name="Town C.D."/>
            <person name="Utterback T."/>
            <person name="Van Aken S."/>
            <person name="Vaysberg M."/>
            <person name="Vysotskaia V.S."/>
            <person name="Walker M."/>
            <person name="Wu D."/>
            <person name="Yu G."/>
            <person name="Fraser C.M."/>
            <person name="Venter J.C."/>
            <person name="Davis R.W."/>
        </authorList>
    </citation>
    <scope>NUCLEOTIDE SEQUENCE [LARGE SCALE GENOMIC DNA]</scope>
    <source>
        <strain>cv. Columbia</strain>
    </source>
</reference>
<reference key="2">
    <citation type="journal article" date="2017" name="Plant J.">
        <title>Araport11: a complete reannotation of the Arabidopsis thaliana reference genome.</title>
        <authorList>
            <person name="Cheng C.Y."/>
            <person name="Krishnakumar V."/>
            <person name="Chan A.P."/>
            <person name="Thibaud-Nissen F."/>
            <person name="Schobel S."/>
            <person name="Town C.D."/>
        </authorList>
    </citation>
    <scope>GENOME REANNOTATION</scope>
    <source>
        <strain>cv. Columbia</strain>
    </source>
</reference>
<reference key="3">
    <citation type="journal article" date="2004" name="Plant Cell">
        <title>Genome-wide analysis of Arabidopsis pentatricopeptide repeat proteins reveals their essential role in organelle biogenesis.</title>
        <authorList>
            <person name="Lurin C."/>
            <person name="Andres C."/>
            <person name="Aubourg S."/>
            <person name="Bellaoui M."/>
            <person name="Bitton F."/>
            <person name="Bruyere C."/>
            <person name="Caboche M."/>
            <person name="Debast C."/>
            <person name="Gualberto J."/>
            <person name="Hoffmann B."/>
            <person name="Lecharny A."/>
            <person name="Le Ret M."/>
            <person name="Martin-Magniette M.-L."/>
            <person name="Mireau H."/>
            <person name="Peeters N."/>
            <person name="Renou J.-P."/>
            <person name="Szurek B."/>
            <person name="Taconnat L."/>
            <person name="Small I."/>
        </authorList>
    </citation>
    <scope>GENE FAMILY</scope>
</reference>
<organism>
    <name type="scientific">Arabidopsis thaliana</name>
    <name type="common">Mouse-ear cress</name>
    <dbReference type="NCBI Taxonomy" id="3702"/>
    <lineage>
        <taxon>Eukaryota</taxon>
        <taxon>Viridiplantae</taxon>
        <taxon>Streptophyta</taxon>
        <taxon>Embryophyta</taxon>
        <taxon>Tracheophyta</taxon>
        <taxon>Spermatophyta</taxon>
        <taxon>Magnoliopsida</taxon>
        <taxon>eudicotyledons</taxon>
        <taxon>Gunneridae</taxon>
        <taxon>Pentapetalae</taxon>
        <taxon>rosids</taxon>
        <taxon>malvids</taxon>
        <taxon>Brassicales</taxon>
        <taxon>Brassicaceae</taxon>
        <taxon>Camelineae</taxon>
        <taxon>Arabidopsis</taxon>
    </lineage>
</organism>
<feature type="transit peptide" description="Mitochondrion" evidence="1">
    <location>
        <begin position="1"/>
        <end position="95"/>
    </location>
</feature>
<feature type="chain" id="PRO_0000342779" description="Putative pentatricopeptide repeat-containing protein At1g12700, mitochondrial">
    <location>
        <begin position="96"/>
        <end position="602"/>
    </location>
</feature>
<feature type="repeat" description="PPR 1">
    <location>
        <begin position="87"/>
        <end position="121"/>
    </location>
</feature>
<feature type="repeat" description="PPR 2">
    <location>
        <begin position="122"/>
        <end position="156"/>
    </location>
</feature>
<feature type="repeat" description="PPR 3">
    <location>
        <begin position="157"/>
        <end position="191"/>
    </location>
</feature>
<feature type="repeat" description="PPR 4">
    <location>
        <begin position="192"/>
        <end position="226"/>
    </location>
</feature>
<feature type="repeat" description="PPR 5">
    <location>
        <begin position="227"/>
        <end position="261"/>
    </location>
</feature>
<feature type="repeat" description="PPR 6">
    <location>
        <begin position="262"/>
        <end position="296"/>
    </location>
</feature>
<feature type="repeat" description="PPR 7">
    <location>
        <begin position="297"/>
        <end position="331"/>
    </location>
</feature>
<feature type="repeat" description="PPR 8">
    <location>
        <begin position="332"/>
        <end position="366"/>
    </location>
</feature>
<feature type="repeat" description="PPR 9">
    <location>
        <begin position="367"/>
        <end position="401"/>
    </location>
</feature>
<feature type="repeat" description="PPR 10">
    <location>
        <begin position="402"/>
        <end position="436"/>
    </location>
</feature>
<feature type="repeat" description="PPR 11">
    <location>
        <begin position="437"/>
        <end position="471"/>
    </location>
</feature>
<feature type="repeat" description="PPR 12">
    <location>
        <begin position="472"/>
        <end position="506"/>
    </location>
</feature>
<feature type="repeat" description="PPR 13">
    <location>
        <begin position="507"/>
        <end position="541"/>
    </location>
</feature>
<feature type="repeat" description="PPR 14">
    <location>
        <begin position="542"/>
        <end position="576"/>
    </location>
</feature>
<gene>
    <name type="ordered locus">At1g12700</name>
    <name type="ORF">T12C24.31</name>
</gene>
<proteinExistence type="inferred from homology"/>